<sequence length="67" mass="7958">MVTIERLLPYSYWIGHPVTNRAIIYPFVGFIPLSLKEVKTLQFIVKLNTAKWELKYQRKRLGHMRPG</sequence>
<accession>P0DTB5</accession>
<evidence type="ECO:0000250" key="1">
    <source>
        <dbReference type="UniProtKB" id="P0DTB4"/>
    </source>
</evidence>
<evidence type="ECO:0000255" key="2"/>
<evidence type="ECO:0000269" key="3">
    <source>
    </source>
</evidence>
<evidence type="ECO:0000305" key="4"/>
<dbReference type="EMBL" id="M33854">
    <property type="status" value="NOT_ANNOTATED_CDS"/>
    <property type="molecule type" value="Genomic_RNA"/>
</dbReference>
<dbReference type="EMBL" id="M16572">
    <property type="status" value="NOT_ANNOTATED_CDS"/>
    <property type="molecule type" value="Genomic_RNA"/>
</dbReference>
<dbReference type="EMBL" id="JX312064">
    <property type="status" value="NOT_ANNOTATED_CDS"/>
    <property type="molecule type" value="Genomic_RNA"/>
</dbReference>
<dbReference type="Proteomes" id="UP000007760">
    <property type="component" value="Genome"/>
</dbReference>
<dbReference type="Proteomes" id="UP000181225">
    <property type="component" value="Genome"/>
</dbReference>
<dbReference type="Proteomes" id="UP000181606">
    <property type="component" value="Genome"/>
</dbReference>
<dbReference type="GO" id="GO:0044162">
    <property type="term" value="C:host cell cytoplasmic vesicle membrane"/>
    <property type="evidence" value="ECO:0007669"/>
    <property type="project" value="UniProtKB-SubCell"/>
</dbReference>
<dbReference type="GO" id="GO:0016020">
    <property type="term" value="C:membrane"/>
    <property type="evidence" value="ECO:0007669"/>
    <property type="project" value="UniProtKB-KW"/>
</dbReference>
<reference key="1">
    <citation type="journal article" date="1990" name="J. Virol.">
        <title>Complete nucleotide sequence of infectious Coxsackievirus B3 cDNA: two initial 5' uridine residues are regained during plus-strand RNA synthesis.</title>
        <authorList>
            <person name="Klump W.M."/>
            <person name="Bergmann I."/>
            <person name="Mueller B.C."/>
            <person name="Ameis D."/>
            <person name="Kandolf R."/>
        </authorList>
    </citation>
    <scope>NUCLEOTIDE SEQUENCE [GENOMIC RNA]</scope>
</reference>
<reference key="2">
    <citation type="journal article" date="1987" name="Virology">
        <title>Genome of coxsackievirus B3.</title>
        <authorList>
            <person name="Lindberg A.M."/>
            <person name="Staalhandske P.O.K."/>
            <person name="Pettersson U."/>
        </authorList>
    </citation>
    <scope>NUCLEOTIDE SEQUENCE [GENOMIC RNA]</scope>
</reference>
<reference key="3">
    <citation type="submission" date="2012-07" db="EMBL/GenBank/DDBJ databases">
        <authorList>
            <person name="Gangaplara A."/>
            <person name="Massilamany C."/>
            <person name="Vu H."/>
            <person name="Pattnaik A.K."/>
            <person name="Reddy J."/>
        </authorList>
    </citation>
    <scope>NUCLEOTIDE SEQUENCE [LARGE SCALE GENOMIC DNA]</scope>
</reference>
<reference key="4">
    <citation type="journal article" date="2019" name="Nat. Commun.">
        <title>A second open reading frame in human enterovirus determines viral replication in intestinal epithelial cells.</title>
        <authorList>
            <person name="Guo H."/>
            <person name="Li Y."/>
            <person name="Liu G."/>
            <person name="Jiang Y."/>
            <person name="Shen S."/>
            <person name="Bi R."/>
            <person name="Huang H."/>
            <person name="Cheng T."/>
            <person name="Wang C."/>
            <person name="Wei W."/>
        </authorList>
    </citation>
    <scope>IDENTIFICATION</scope>
    <scope>FUNCTION</scope>
</reference>
<feature type="chain" id="PRO_0000449089" description="ORF2p protein">
    <location>
        <begin position="1"/>
        <end position="67"/>
    </location>
</feature>
<feature type="transmembrane region" evidence="2">
    <location>
        <begin position="22"/>
        <end position="38"/>
    </location>
</feature>
<feature type="region of interest" description="Important for viral replication in intestinal cells" evidence="3">
    <location>
        <begin position="13"/>
        <end position="18"/>
    </location>
</feature>
<feature type="sequence conflict" description="In Ref. 1." evidence="4" ref="1">
    <original>L</original>
    <variation>S</variation>
    <location>
        <position position="7"/>
    </location>
</feature>
<feature type="sequence conflict" description="In Ref. 2." evidence="4" ref="2">
    <original>P</original>
    <variation>L</variation>
    <location>
        <position position="26"/>
    </location>
</feature>
<proteinExistence type="inferred from homology"/>
<organismHost>
    <name type="scientific">Homo sapiens</name>
    <name type="common">Human</name>
    <dbReference type="NCBI Taxonomy" id="9606"/>
</organismHost>
<comment type="function">
    <text evidence="3">Facilitates virus release from intestinal cells in vitro, possibly through the host autophagic pathway.</text>
</comment>
<comment type="subcellular location">
    <subcellularLocation>
        <location evidence="1">Host cytoplasmic vesicle membrane</location>
        <topology evidence="2">Single-pass membrane protein</topology>
    </subcellularLocation>
</comment>
<organism>
    <name type="scientific">Coxsackievirus B3 (strain Nancy)</name>
    <dbReference type="NCBI Taxonomy" id="103903"/>
    <lineage>
        <taxon>Viruses</taxon>
        <taxon>Riboviria</taxon>
        <taxon>Orthornavirae</taxon>
        <taxon>Pisuviricota</taxon>
        <taxon>Pisoniviricetes</taxon>
        <taxon>Picornavirales</taxon>
        <taxon>Picornaviridae</taxon>
        <taxon>Ensavirinae</taxon>
        <taxon>Enterovirus</taxon>
        <taxon>Enterovirus B</taxon>
    </lineage>
</organism>
<keyword id="KW-1036">Host cytoplasmic vesicle</keyword>
<keyword id="KW-1043">Host membrane</keyword>
<keyword id="KW-0472">Membrane</keyword>
<keyword id="KW-0812">Transmembrane</keyword>
<keyword id="KW-1133">Transmembrane helix</keyword>
<protein>
    <recommendedName>
        <fullName>ORF2p protein</fullName>
    </recommendedName>
</protein>
<name>ORF2P_CXB3N</name>